<feature type="chain" id="PRO_0000131446" description="Large ribosomal subunit protein uL18">
    <location>
        <begin position="1"/>
        <end position="297"/>
    </location>
</feature>
<feature type="region of interest" description="Disordered" evidence="2">
    <location>
        <begin position="258"/>
        <end position="277"/>
    </location>
</feature>
<feature type="compositionally biased region" description="Basic residues" evidence="2">
    <location>
        <begin position="258"/>
        <end position="267"/>
    </location>
</feature>
<feature type="compositionally biased region" description="Basic and acidic residues" evidence="2">
    <location>
        <begin position="268"/>
        <end position="277"/>
    </location>
</feature>
<accession>O65353</accession>
<evidence type="ECO:0000250" key="1">
    <source>
        <dbReference type="UniProtKB" id="P26321"/>
    </source>
</evidence>
<evidence type="ECO:0000256" key="2">
    <source>
        <dbReference type="SAM" id="MobiDB-lite"/>
    </source>
</evidence>
<evidence type="ECO:0000305" key="3"/>
<organism>
    <name type="scientific">Helianthus annuus</name>
    <name type="common">Common sunflower</name>
    <dbReference type="NCBI Taxonomy" id="4232"/>
    <lineage>
        <taxon>Eukaryota</taxon>
        <taxon>Viridiplantae</taxon>
        <taxon>Streptophyta</taxon>
        <taxon>Embryophyta</taxon>
        <taxon>Tracheophyta</taxon>
        <taxon>Spermatophyta</taxon>
        <taxon>Magnoliopsida</taxon>
        <taxon>eudicotyledons</taxon>
        <taxon>Gunneridae</taxon>
        <taxon>Pentapetalae</taxon>
        <taxon>asterids</taxon>
        <taxon>campanulids</taxon>
        <taxon>Asterales</taxon>
        <taxon>Asteraceae</taxon>
        <taxon>Asteroideae</taxon>
        <taxon>Heliantheae alliance</taxon>
        <taxon>Heliantheae</taxon>
        <taxon>Helianthus</taxon>
    </lineage>
</organism>
<protein>
    <recommendedName>
        <fullName evidence="3">Large ribosomal subunit protein uL18</fullName>
    </recommendedName>
    <alternativeName>
        <fullName>60S ribosomal protein L5</fullName>
    </alternativeName>
</protein>
<comment type="function">
    <text evidence="1">Component of the ribosome, a large ribonucleoprotein complex responsible for the synthesis of proteins in the cell. The small ribosomal subunit (SSU) binds messenger RNAs (mRNAs) and translates the encoded message by selecting cognate aminoacyl-transfer RNA (tRNA) molecules. The large subunit (LSU) contains the ribosomal catalytic site termed the peptidyl transferase center (PTC), which catalyzes the formation of peptide bonds, thereby polymerizing the amino acids delivered by tRNAs into a polypeptide chain. The nascent polypeptides leave the ribosome through a tunnel in the LSU and interact with protein factors that function in enzymatic processing, targeting, and the membrane insertion of nascent chains at the exit of the ribosomal tunnel.</text>
</comment>
<comment type="subunit">
    <text evidence="1">Component of the large ribosomal subunit (LSU).</text>
</comment>
<comment type="subcellular location">
    <subcellularLocation>
        <location evidence="1">Cytoplasm</location>
    </subcellularLocation>
    <subcellularLocation>
        <location evidence="1">Nucleus</location>
    </subcellularLocation>
</comment>
<comment type="similarity">
    <text evidence="3">Belongs to the universal ribosomal protein uL18 family.</text>
</comment>
<proteinExistence type="evidence at transcript level"/>
<dbReference type="EMBL" id="AF066077">
    <property type="protein sequence ID" value="AAC17448.1"/>
    <property type="molecule type" value="mRNA"/>
</dbReference>
<dbReference type="PIR" id="T12615">
    <property type="entry name" value="T12615"/>
</dbReference>
<dbReference type="SMR" id="O65353"/>
<dbReference type="GO" id="GO:0022626">
    <property type="term" value="C:cytosolic ribosome"/>
    <property type="evidence" value="ECO:0007669"/>
    <property type="project" value="UniProtKB-ARBA"/>
</dbReference>
<dbReference type="GO" id="GO:0005634">
    <property type="term" value="C:nucleus"/>
    <property type="evidence" value="ECO:0007669"/>
    <property type="project" value="UniProtKB-SubCell"/>
</dbReference>
<dbReference type="GO" id="GO:1990904">
    <property type="term" value="C:ribonucleoprotein complex"/>
    <property type="evidence" value="ECO:0007669"/>
    <property type="project" value="UniProtKB-KW"/>
</dbReference>
<dbReference type="GO" id="GO:0008097">
    <property type="term" value="F:5S rRNA binding"/>
    <property type="evidence" value="ECO:0007669"/>
    <property type="project" value="InterPro"/>
</dbReference>
<dbReference type="GO" id="GO:0003735">
    <property type="term" value="F:structural constituent of ribosome"/>
    <property type="evidence" value="ECO:0007669"/>
    <property type="project" value="InterPro"/>
</dbReference>
<dbReference type="GO" id="GO:0006412">
    <property type="term" value="P:translation"/>
    <property type="evidence" value="ECO:0007669"/>
    <property type="project" value="InterPro"/>
</dbReference>
<dbReference type="CDD" id="cd00432">
    <property type="entry name" value="Ribosomal_L18_L5e"/>
    <property type="match status" value="1"/>
</dbReference>
<dbReference type="FunFam" id="3.30.420.100:FF:000002">
    <property type="entry name" value="60S ribosomal protein L5"/>
    <property type="match status" value="1"/>
</dbReference>
<dbReference type="Gene3D" id="3.30.420.100">
    <property type="match status" value="1"/>
</dbReference>
<dbReference type="HAMAP" id="MF_01337_A">
    <property type="entry name" value="Ribosomal_uL18_A"/>
    <property type="match status" value="1"/>
</dbReference>
<dbReference type="InterPro" id="IPR005485">
    <property type="entry name" value="Rbsml_uL18_euk"/>
</dbReference>
<dbReference type="InterPro" id="IPR025607">
    <property type="entry name" value="Ribosomal_uL18_C_euk"/>
</dbReference>
<dbReference type="PANTHER" id="PTHR23410:SF12">
    <property type="entry name" value="LARGE RIBOSOMAL SUBUNIT PROTEIN UL18"/>
    <property type="match status" value="1"/>
</dbReference>
<dbReference type="PANTHER" id="PTHR23410">
    <property type="entry name" value="RIBOSOMAL PROTEIN L5-RELATED"/>
    <property type="match status" value="1"/>
</dbReference>
<dbReference type="Pfam" id="PF14204">
    <property type="entry name" value="Ribosomal_L18_c"/>
    <property type="match status" value="1"/>
</dbReference>
<dbReference type="Pfam" id="PF17144">
    <property type="entry name" value="Ribosomal_L5e"/>
    <property type="match status" value="1"/>
</dbReference>
<dbReference type="PRINTS" id="PR00058">
    <property type="entry name" value="RIBOSOMALL5"/>
</dbReference>
<dbReference type="SUPFAM" id="SSF53137">
    <property type="entry name" value="Translational machinery components"/>
    <property type="match status" value="1"/>
</dbReference>
<reference key="1">
    <citation type="submission" date="1998-05" db="EMBL/GenBank/DDBJ databases">
        <title>Coding sequence for an RPL5A-related protein from sunflower.</title>
        <authorList>
            <person name="Eliasson A."/>
            <person name="Hammann P."/>
            <person name="Steinmetz A."/>
        </authorList>
    </citation>
    <scope>NUCLEOTIDE SEQUENCE [MRNA]</scope>
    <source>
        <strain>cv. HA300</strain>
        <tissue>Pollen</tissue>
    </source>
</reference>
<name>RL5_HELAN</name>
<gene>
    <name type="primary">RPL5A</name>
</gene>
<sequence length="297" mass="33914">MGFVKVVKNKQYFKRYQVKFKRRREGKTDYFARKRLIAQDKNKYNTPKYRLVVRFSNRDITCQVAYSRIEGDKILCAAYAHELPQYGVKVGLTNYAAAYCTGLLLARKLLSQLGLDKLYIGSTEVTGEEFNVKPVEDGPGAFRCYLDVGLMRTTTGARVFGAMKGAVDGGLNILHSTKRFPGFDSESKEFNADVHRQHIFGQHVAEYMRQLAEEDDEAYKRQFSQYIKLGLNADAIEGLYKKAHEAIRANPARKTVAKKAHPKKRWTEKKLTREQRQGKVAAAKAEWLKKIEAGEVE</sequence>
<keyword id="KW-0963">Cytoplasm</keyword>
<keyword id="KW-0539">Nucleus</keyword>
<keyword id="KW-0687">Ribonucleoprotein</keyword>
<keyword id="KW-0689">Ribosomal protein</keyword>
<keyword id="KW-0694">RNA-binding</keyword>
<keyword id="KW-0699">rRNA-binding</keyword>